<comment type="function">
    <text evidence="1">Catalyzes the reversible cleavage of L-rhamnulose-1-phosphate to dihydroxyacetone phosphate (DHAP) and L-lactaldehyde.</text>
</comment>
<comment type="catalytic activity">
    <reaction evidence="1">
        <text>L-rhamnulose 1-phosphate = (S)-lactaldehyde + dihydroxyacetone phosphate</text>
        <dbReference type="Rhea" id="RHEA:19689"/>
        <dbReference type="ChEBI" id="CHEBI:18041"/>
        <dbReference type="ChEBI" id="CHEBI:57642"/>
        <dbReference type="ChEBI" id="CHEBI:58313"/>
        <dbReference type="EC" id="4.1.2.19"/>
    </reaction>
</comment>
<comment type="cofactor">
    <cofactor evidence="1">
        <name>Zn(2+)</name>
        <dbReference type="ChEBI" id="CHEBI:29105"/>
    </cofactor>
    <text evidence="1">Binds 1 zinc ion per subunit.</text>
</comment>
<comment type="pathway">
    <text evidence="1">Carbohydrate degradation; L-rhamnose degradation; glycerone phosphate from L-rhamnose: step 3/3.</text>
</comment>
<comment type="subunit">
    <text evidence="1">Homotetramer.</text>
</comment>
<comment type="subcellular location">
    <subcellularLocation>
        <location evidence="1">Cytoplasm</location>
    </subcellularLocation>
</comment>
<comment type="similarity">
    <text evidence="1">Belongs to the aldolase class II family. RhaD subfamily.</text>
</comment>
<name>RHAD_SALPC</name>
<evidence type="ECO:0000255" key="1">
    <source>
        <dbReference type="HAMAP-Rule" id="MF_00770"/>
    </source>
</evidence>
<sequence length="275" mass="30217">MQNITDSWFVQGMIKATSDAWLKGWDERNGGNLTLRLDETDIAPFAANFHEKPRYIALSQPMPLLTNTPFIVTGSGKFFRNVQLDPAANLGVVKIDSDGAGYHILWGLTHDAVPTSELPAHFLSHCERIKATHGKDRVIMHCHATNLIALTYVLENNTALITRKLWEGSTECLVVFPDGVGILPWMVPGTDEIGQATAQEMQKHSLVLWPFHGVFGSGPTLDETFGLIDTAEKSAEVLVKIYSMGGMKQTITREELVALGKRFGVTPLASAVALY</sequence>
<keyword id="KW-0963">Cytoplasm</keyword>
<keyword id="KW-0456">Lyase</keyword>
<keyword id="KW-0479">Metal-binding</keyword>
<keyword id="KW-0684">Rhamnose metabolism</keyword>
<keyword id="KW-0862">Zinc</keyword>
<proteinExistence type="inferred from homology"/>
<organism>
    <name type="scientific">Salmonella paratyphi C (strain RKS4594)</name>
    <dbReference type="NCBI Taxonomy" id="476213"/>
    <lineage>
        <taxon>Bacteria</taxon>
        <taxon>Pseudomonadati</taxon>
        <taxon>Pseudomonadota</taxon>
        <taxon>Gammaproteobacteria</taxon>
        <taxon>Enterobacterales</taxon>
        <taxon>Enterobacteriaceae</taxon>
        <taxon>Salmonella</taxon>
    </lineage>
</organism>
<gene>
    <name evidence="1" type="primary">rhaD</name>
    <name type="ordered locus">SPC_4149</name>
</gene>
<feature type="chain" id="PRO_1000148452" description="Rhamnulose-1-phosphate aldolase">
    <location>
        <begin position="1"/>
        <end position="275"/>
    </location>
</feature>
<feature type="active site" evidence="1">
    <location>
        <position position="117"/>
    </location>
</feature>
<feature type="binding site" evidence="1">
    <location>
        <position position="141"/>
    </location>
    <ligand>
        <name>Zn(2+)</name>
        <dbReference type="ChEBI" id="CHEBI:29105"/>
    </ligand>
</feature>
<feature type="binding site" evidence="1">
    <location>
        <position position="143"/>
    </location>
    <ligand>
        <name>Zn(2+)</name>
        <dbReference type="ChEBI" id="CHEBI:29105"/>
    </ligand>
</feature>
<feature type="binding site" evidence="1">
    <location>
        <position position="212"/>
    </location>
    <ligand>
        <name>Zn(2+)</name>
        <dbReference type="ChEBI" id="CHEBI:29105"/>
    </ligand>
</feature>
<accession>C0Q3L1</accession>
<protein>
    <recommendedName>
        <fullName evidence="1">Rhamnulose-1-phosphate aldolase</fullName>
        <ecNumber evidence="1">4.1.2.19</ecNumber>
    </recommendedName>
</protein>
<dbReference type="EC" id="4.1.2.19" evidence="1"/>
<dbReference type="EMBL" id="CP000857">
    <property type="protein sequence ID" value="ACN48213.1"/>
    <property type="molecule type" value="Genomic_DNA"/>
</dbReference>
<dbReference type="RefSeq" id="WP_001179699.1">
    <property type="nucleotide sequence ID" value="NC_012125.1"/>
</dbReference>
<dbReference type="SMR" id="C0Q3L1"/>
<dbReference type="KEGG" id="sei:SPC_4149"/>
<dbReference type="HOGENOM" id="CLU_076831_0_0_6"/>
<dbReference type="UniPathway" id="UPA00541">
    <property type="reaction ID" value="UER00603"/>
</dbReference>
<dbReference type="Proteomes" id="UP000001599">
    <property type="component" value="Chromosome"/>
</dbReference>
<dbReference type="GO" id="GO:0005829">
    <property type="term" value="C:cytosol"/>
    <property type="evidence" value="ECO:0007669"/>
    <property type="project" value="TreeGrafter"/>
</dbReference>
<dbReference type="GO" id="GO:0046872">
    <property type="term" value="F:metal ion binding"/>
    <property type="evidence" value="ECO:0007669"/>
    <property type="project" value="UniProtKB-KW"/>
</dbReference>
<dbReference type="GO" id="GO:0008994">
    <property type="term" value="F:rhamnulose-1-phosphate aldolase activity"/>
    <property type="evidence" value="ECO:0007669"/>
    <property type="project" value="UniProtKB-UniRule"/>
</dbReference>
<dbReference type="GO" id="GO:0019323">
    <property type="term" value="P:pentose catabolic process"/>
    <property type="evidence" value="ECO:0007669"/>
    <property type="project" value="TreeGrafter"/>
</dbReference>
<dbReference type="GO" id="GO:0019301">
    <property type="term" value="P:rhamnose catabolic process"/>
    <property type="evidence" value="ECO:0007669"/>
    <property type="project" value="UniProtKB-UniRule"/>
</dbReference>
<dbReference type="CDD" id="cd00398">
    <property type="entry name" value="Aldolase_II"/>
    <property type="match status" value="1"/>
</dbReference>
<dbReference type="FunFam" id="3.40.225.10:FF:000006">
    <property type="entry name" value="Rhamnulose-1-phosphate aldolase"/>
    <property type="match status" value="1"/>
</dbReference>
<dbReference type="Gene3D" id="3.40.225.10">
    <property type="entry name" value="Class II aldolase/adducin N-terminal domain"/>
    <property type="match status" value="1"/>
</dbReference>
<dbReference type="HAMAP" id="MF_00770">
    <property type="entry name" value="RhaD"/>
    <property type="match status" value="1"/>
</dbReference>
<dbReference type="InterPro" id="IPR050197">
    <property type="entry name" value="Aldolase_class_II_sugar_metab"/>
</dbReference>
<dbReference type="InterPro" id="IPR001303">
    <property type="entry name" value="Aldolase_II/adducin_N"/>
</dbReference>
<dbReference type="InterPro" id="IPR036409">
    <property type="entry name" value="Aldolase_II/adducin_N_sf"/>
</dbReference>
<dbReference type="InterPro" id="IPR013447">
    <property type="entry name" value="Rhamnulose-1-P_Aldolase"/>
</dbReference>
<dbReference type="NCBIfam" id="NF002963">
    <property type="entry name" value="PRK03634.1"/>
    <property type="match status" value="1"/>
</dbReference>
<dbReference type="NCBIfam" id="TIGR02624">
    <property type="entry name" value="rhamnu_1P_ald"/>
    <property type="match status" value="1"/>
</dbReference>
<dbReference type="PANTHER" id="PTHR22789">
    <property type="entry name" value="FUCULOSE PHOSPHATE ALDOLASE"/>
    <property type="match status" value="1"/>
</dbReference>
<dbReference type="PANTHER" id="PTHR22789:SF16">
    <property type="entry name" value="RHAMNULOSE-1-PHOSPHATE ALDOLASE"/>
    <property type="match status" value="1"/>
</dbReference>
<dbReference type="Pfam" id="PF00596">
    <property type="entry name" value="Aldolase_II"/>
    <property type="match status" value="1"/>
</dbReference>
<dbReference type="SMART" id="SM01007">
    <property type="entry name" value="Aldolase_II"/>
    <property type="match status" value="1"/>
</dbReference>
<dbReference type="SUPFAM" id="SSF53639">
    <property type="entry name" value="AraD/HMP-PK domain-like"/>
    <property type="match status" value="1"/>
</dbReference>
<reference key="1">
    <citation type="journal article" date="2009" name="PLoS ONE">
        <title>Salmonella paratyphi C: genetic divergence from Salmonella choleraesuis and pathogenic convergence with Salmonella typhi.</title>
        <authorList>
            <person name="Liu W.-Q."/>
            <person name="Feng Y."/>
            <person name="Wang Y."/>
            <person name="Zou Q.-H."/>
            <person name="Chen F."/>
            <person name="Guo J.-T."/>
            <person name="Peng Y.-H."/>
            <person name="Jin Y."/>
            <person name="Li Y.-G."/>
            <person name="Hu S.-N."/>
            <person name="Johnston R.N."/>
            <person name="Liu G.-R."/>
            <person name="Liu S.-L."/>
        </authorList>
    </citation>
    <scope>NUCLEOTIDE SEQUENCE [LARGE SCALE GENOMIC DNA]</scope>
    <source>
        <strain>RKS4594</strain>
    </source>
</reference>